<feature type="chain" id="PRO_1000016812" description="Queuine tRNA-ribosyltransferase">
    <location>
        <begin position="1"/>
        <end position="374"/>
    </location>
</feature>
<feature type="region of interest" description="RNA binding" evidence="1">
    <location>
        <begin position="247"/>
        <end position="253"/>
    </location>
</feature>
<feature type="region of interest" description="RNA binding; important for wobble base 34 recognition" evidence="1">
    <location>
        <begin position="271"/>
        <end position="275"/>
    </location>
</feature>
<feature type="active site" description="Proton acceptor" evidence="1">
    <location>
        <position position="91"/>
    </location>
</feature>
<feature type="active site" description="Nucleophile" evidence="1">
    <location>
        <position position="266"/>
    </location>
</feature>
<feature type="binding site" evidence="1">
    <location>
        <begin position="91"/>
        <end position="95"/>
    </location>
    <ligand>
        <name>substrate</name>
    </ligand>
</feature>
<feature type="binding site" evidence="1">
    <location>
        <position position="145"/>
    </location>
    <ligand>
        <name>substrate</name>
    </ligand>
</feature>
<feature type="binding site" evidence="1">
    <location>
        <position position="189"/>
    </location>
    <ligand>
        <name>substrate</name>
    </ligand>
</feature>
<feature type="binding site" evidence="1">
    <location>
        <position position="216"/>
    </location>
    <ligand>
        <name>substrate</name>
    </ligand>
</feature>
<feature type="binding site" evidence="1">
    <location>
        <position position="304"/>
    </location>
    <ligand>
        <name>Zn(2+)</name>
        <dbReference type="ChEBI" id="CHEBI:29105"/>
    </ligand>
</feature>
<feature type="binding site" evidence="1">
    <location>
        <position position="306"/>
    </location>
    <ligand>
        <name>Zn(2+)</name>
        <dbReference type="ChEBI" id="CHEBI:29105"/>
    </ligand>
</feature>
<feature type="binding site" evidence="1">
    <location>
        <position position="309"/>
    </location>
    <ligand>
        <name>Zn(2+)</name>
        <dbReference type="ChEBI" id="CHEBI:29105"/>
    </ligand>
</feature>
<feature type="binding site" evidence="1">
    <location>
        <position position="335"/>
    </location>
    <ligand>
        <name>Zn(2+)</name>
        <dbReference type="ChEBI" id="CHEBI:29105"/>
    </ligand>
</feature>
<sequence length="374" mass="42479">MIFQTTSEDLRTRARTGILNLNGVKLETPVFMPVGTRGVVKTISADDLEELEYSLILGNTYHLYLRPGTAVLERFGGLKKFSTWKRALLTDSGGYQVFSLNSLFKYEQDGVRFQSHIDGSRHYFTPNSVIDIQRTIGSDIMMVLDDCAPFDSSQERLRQSLDRTHRWAEMSVEYWEKNKNSSHLFGIFQGGIDLGLRLESLQKIVSLPFDGIAIGGLSVGEPRKDFIRILEGVSAYTDRSRPLYLMGVGTVPDILDGVKNGVDMFDCVLPTRNARNGQVFTSLGKINLRNEKWKSSDVPIDPHCGCKVCKRYSIGYIRHLHHVGELTAFSLSTYHNLYFMKNFLSEIRKSIQAGEFLKIYAKWKNLYEKPEFSG</sequence>
<name>TGT_LEPBL</name>
<gene>
    <name evidence="1" type="primary">tgt</name>
    <name type="ordered locus">LBL_2244</name>
</gene>
<accession>Q04Z48</accession>
<reference key="1">
    <citation type="journal article" date="2006" name="Proc. Natl. Acad. Sci. U.S.A.">
        <title>Genome reduction in Leptospira borgpetersenii reflects limited transmission potential.</title>
        <authorList>
            <person name="Bulach D.M."/>
            <person name="Zuerner R.L."/>
            <person name="Wilson P."/>
            <person name="Seemann T."/>
            <person name="McGrath A."/>
            <person name="Cullen P.A."/>
            <person name="Davis J."/>
            <person name="Johnson M."/>
            <person name="Kuczek E."/>
            <person name="Alt D.P."/>
            <person name="Peterson-Burch B."/>
            <person name="Coppel R.L."/>
            <person name="Rood J.I."/>
            <person name="Davies J.K."/>
            <person name="Adler B."/>
        </authorList>
    </citation>
    <scope>NUCLEOTIDE SEQUENCE [LARGE SCALE GENOMIC DNA]</scope>
    <source>
        <strain>L550</strain>
    </source>
</reference>
<evidence type="ECO:0000255" key="1">
    <source>
        <dbReference type="HAMAP-Rule" id="MF_00168"/>
    </source>
</evidence>
<keyword id="KW-0328">Glycosyltransferase</keyword>
<keyword id="KW-0479">Metal-binding</keyword>
<keyword id="KW-0671">Queuosine biosynthesis</keyword>
<keyword id="KW-0808">Transferase</keyword>
<keyword id="KW-0819">tRNA processing</keyword>
<keyword id="KW-0862">Zinc</keyword>
<dbReference type="EC" id="2.4.2.29" evidence="1"/>
<dbReference type="EMBL" id="CP000348">
    <property type="protein sequence ID" value="ABJ79647.1"/>
    <property type="molecule type" value="Genomic_DNA"/>
</dbReference>
<dbReference type="RefSeq" id="WP_002750684.1">
    <property type="nucleotide sequence ID" value="NC_008508.1"/>
</dbReference>
<dbReference type="SMR" id="Q04Z48"/>
<dbReference type="KEGG" id="lbl:LBL_2244"/>
<dbReference type="HOGENOM" id="CLU_022060_0_1_12"/>
<dbReference type="UniPathway" id="UPA00392"/>
<dbReference type="GO" id="GO:0005829">
    <property type="term" value="C:cytosol"/>
    <property type="evidence" value="ECO:0007669"/>
    <property type="project" value="TreeGrafter"/>
</dbReference>
<dbReference type="GO" id="GO:0046872">
    <property type="term" value="F:metal ion binding"/>
    <property type="evidence" value="ECO:0007669"/>
    <property type="project" value="UniProtKB-KW"/>
</dbReference>
<dbReference type="GO" id="GO:0008479">
    <property type="term" value="F:tRNA-guanosine(34) queuine transglycosylase activity"/>
    <property type="evidence" value="ECO:0007669"/>
    <property type="project" value="UniProtKB-UniRule"/>
</dbReference>
<dbReference type="GO" id="GO:0008616">
    <property type="term" value="P:queuosine biosynthetic process"/>
    <property type="evidence" value="ECO:0007669"/>
    <property type="project" value="UniProtKB-UniRule"/>
</dbReference>
<dbReference type="GO" id="GO:0101030">
    <property type="term" value="P:tRNA-guanine transglycosylation"/>
    <property type="evidence" value="ECO:0007669"/>
    <property type="project" value="InterPro"/>
</dbReference>
<dbReference type="Gene3D" id="3.20.20.105">
    <property type="entry name" value="Queuine tRNA-ribosyltransferase-like"/>
    <property type="match status" value="1"/>
</dbReference>
<dbReference type="HAMAP" id="MF_00168">
    <property type="entry name" value="Q_tRNA_Tgt"/>
    <property type="match status" value="1"/>
</dbReference>
<dbReference type="InterPro" id="IPR004803">
    <property type="entry name" value="TGT"/>
</dbReference>
<dbReference type="InterPro" id="IPR036511">
    <property type="entry name" value="TGT-like_sf"/>
</dbReference>
<dbReference type="InterPro" id="IPR002616">
    <property type="entry name" value="tRNA_ribo_trans-like"/>
</dbReference>
<dbReference type="NCBIfam" id="TIGR00430">
    <property type="entry name" value="Q_tRNA_tgt"/>
    <property type="match status" value="1"/>
</dbReference>
<dbReference type="NCBIfam" id="TIGR00449">
    <property type="entry name" value="tgt_general"/>
    <property type="match status" value="1"/>
</dbReference>
<dbReference type="PANTHER" id="PTHR43530">
    <property type="entry name" value="QUEUINE TRNA-RIBOSYLTRANSFERASE CATALYTIC SUBUNIT 1"/>
    <property type="match status" value="1"/>
</dbReference>
<dbReference type="PANTHER" id="PTHR43530:SF1">
    <property type="entry name" value="QUEUINE TRNA-RIBOSYLTRANSFERASE CATALYTIC SUBUNIT 1"/>
    <property type="match status" value="1"/>
</dbReference>
<dbReference type="Pfam" id="PF01702">
    <property type="entry name" value="TGT"/>
    <property type="match status" value="1"/>
</dbReference>
<dbReference type="SUPFAM" id="SSF51713">
    <property type="entry name" value="tRNA-guanine transglycosylase"/>
    <property type="match status" value="1"/>
</dbReference>
<organism>
    <name type="scientific">Leptospira borgpetersenii serovar Hardjo-bovis (strain L550)</name>
    <dbReference type="NCBI Taxonomy" id="355276"/>
    <lineage>
        <taxon>Bacteria</taxon>
        <taxon>Pseudomonadati</taxon>
        <taxon>Spirochaetota</taxon>
        <taxon>Spirochaetia</taxon>
        <taxon>Leptospirales</taxon>
        <taxon>Leptospiraceae</taxon>
        <taxon>Leptospira</taxon>
    </lineage>
</organism>
<protein>
    <recommendedName>
        <fullName evidence="1">Queuine tRNA-ribosyltransferase</fullName>
        <ecNumber evidence="1">2.4.2.29</ecNumber>
    </recommendedName>
    <alternativeName>
        <fullName evidence="1">Guanine insertion enzyme</fullName>
    </alternativeName>
    <alternativeName>
        <fullName evidence="1">tRNA-guanine transglycosylase</fullName>
    </alternativeName>
</protein>
<comment type="function">
    <text evidence="1">Catalyzes the base-exchange of a guanine (G) residue with the queuine precursor 7-aminomethyl-7-deazaguanine (PreQ1) at position 34 (anticodon wobble position) in tRNAs with GU(N) anticodons (tRNA-Asp, -Asn, -His and -Tyr). Catalysis occurs through a double-displacement mechanism. The nucleophile active site attacks the C1' of nucleotide 34 to detach the guanine base from the RNA, forming a covalent enzyme-RNA intermediate. The proton acceptor active site deprotonates the incoming PreQ1, allowing a nucleophilic attack on the C1' of the ribose to form the product. After dissociation, two additional enzymatic reactions on the tRNA convert PreQ1 to queuine (Q), resulting in the hypermodified nucleoside queuosine (7-(((4,5-cis-dihydroxy-2-cyclopenten-1-yl)amino)methyl)-7-deazaguanosine).</text>
</comment>
<comment type="catalytic activity">
    <reaction evidence="1">
        <text>7-aminomethyl-7-carbaguanine + guanosine(34) in tRNA = 7-aminomethyl-7-carbaguanosine(34) in tRNA + guanine</text>
        <dbReference type="Rhea" id="RHEA:24104"/>
        <dbReference type="Rhea" id="RHEA-COMP:10341"/>
        <dbReference type="Rhea" id="RHEA-COMP:10342"/>
        <dbReference type="ChEBI" id="CHEBI:16235"/>
        <dbReference type="ChEBI" id="CHEBI:58703"/>
        <dbReference type="ChEBI" id="CHEBI:74269"/>
        <dbReference type="ChEBI" id="CHEBI:82833"/>
        <dbReference type="EC" id="2.4.2.29"/>
    </reaction>
</comment>
<comment type="cofactor">
    <cofactor evidence="1">
        <name>Zn(2+)</name>
        <dbReference type="ChEBI" id="CHEBI:29105"/>
    </cofactor>
    <text evidence="1">Binds 1 zinc ion per subunit.</text>
</comment>
<comment type="pathway">
    <text evidence="1">tRNA modification; tRNA-queuosine biosynthesis.</text>
</comment>
<comment type="subunit">
    <text evidence="1">Homodimer. Within each dimer, one monomer is responsible for RNA recognition and catalysis, while the other monomer binds to the replacement base PreQ1.</text>
</comment>
<comment type="similarity">
    <text evidence="1">Belongs to the queuine tRNA-ribosyltransferase family.</text>
</comment>
<proteinExistence type="inferred from homology"/>